<keyword id="KW-0378">Hydrolase</keyword>
<keyword id="KW-1185">Reference proteome</keyword>
<dbReference type="EC" id="3.5.3.12" evidence="1"/>
<dbReference type="EMBL" id="AE007317">
    <property type="protein sequence ID" value="AAK99626.1"/>
    <property type="molecule type" value="Genomic_DNA"/>
</dbReference>
<dbReference type="PIR" id="F97974">
    <property type="entry name" value="F97974"/>
</dbReference>
<dbReference type="RefSeq" id="NP_358416.1">
    <property type="nucleotide sequence ID" value="NC_003098.1"/>
</dbReference>
<dbReference type="RefSeq" id="WP_000969442.1">
    <property type="nucleotide sequence ID" value="NC_003098.1"/>
</dbReference>
<dbReference type="SMR" id="Q8DQ68"/>
<dbReference type="STRING" id="171101.spr0822"/>
<dbReference type="KEGG" id="spr:spr0822"/>
<dbReference type="PATRIC" id="fig|171101.6.peg.912"/>
<dbReference type="eggNOG" id="COG2957">
    <property type="taxonomic scope" value="Bacteria"/>
</dbReference>
<dbReference type="HOGENOM" id="CLU_037682_1_0_9"/>
<dbReference type="Proteomes" id="UP000000586">
    <property type="component" value="Chromosome"/>
</dbReference>
<dbReference type="GO" id="GO:0047632">
    <property type="term" value="F:agmatine deiminase activity"/>
    <property type="evidence" value="ECO:0007669"/>
    <property type="project" value="UniProtKB-UniRule"/>
</dbReference>
<dbReference type="GO" id="GO:0004668">
    <property type="term" value="F:protein-arginine deiminase activity"/>
    <property type="evidence" value="ECO:0007669"/>
    <property type="project" value="InterPro"/>
</dbReference>
<dbReference type="GO" id="GO:0009446">
    <property type="term" value="P:putrescine biosynthetic process"/>
    <property type="evidence" value="ECO:0007669"/>
    <property type="project" value="InterPro"/>
</dbReference>
<dbReference type="Gene3D" id="3.75.10.10">
    <property type="entry name" value="L-arginine/glycine Amidinotransferase, Chain A"/>
    <property type="match status" value="1"/>
</dbReference>
<dbReference type="HAMAP" id="MF_01841">
    <property type="entry name" value="Agmatine_deimin"/>
    <property type="match status" value="1"/>
</dbReference>
<dbReference type="InterPro" id="IPR017754">
    <property type="entry name" value="Agmatine_deiminase"/>
</dbReference>
<dbReference type="InterPro" id="IPR007466">
    <property type="entry name" value="Peptidyl-Arg-deiminase_porph"/>
</dbReference>
<dbReference type="NCBIfam" id="TIGR03380">
    <property type="entry name" value="agmatine_aguA"/>
    <property type="match status" value="1"/>
</dbReference>
<dbReference type="NCBIfam" id="NF010070">
    <property type="entry name" value="PRK13551.1"/>
    <property type="match status" value="1"/>
</dbReference>
<dbReference type="PANTHER" id="PTHR31377">
    <property type="entry name" value="AGMATINE DEIMINASE-RELATED"/>
    <property type="match status" value="1"/>
</dbReference>
<dbReference type="PANTHER" id="PTHR31377:SF0">
    <property type="entry name" value="AGMATINE DEIMINASE-RELATED"/>
    <property type="match status" value="1"/>
</dbReference>
<dbReference type="Pfam" id="PF04371">
    <property type="entry name" value="PAD_porph"/>
    <property type="match status" value="1"/>
</dbReference>
<dbReference type="SUPFAM" id="SSF55909">
    <property type="entry name" value="Pentein"/>
    <property type="match status" value="1"/>
</dbReference>
<sequence>MMDSPKKLGYHMPAEYEPHHGTLMIWPIRPGSWPFQGKAAKRAFTQIIETIAEGERVYLLVEQAYLSEAQSYLGDKVVYLDIPTNDAWARDTGPTILVNDKGKKLAVDWAFNAWGGTYDGLYQDYEEDDQVASRFAEALERPVYDAKPFVLEGGAIHSDGQGTILVTESCLLSPGRNPNLTKEEIENTLLESLGAEKVIWLPYGIYQDETNEHVDNVVAFVGPAEVVLAWTDDENDPQYAMSKADLELLEQETDAKGCHFTIHKLPIPAVRQVVTEEDLPGYIYEEGEEERYAGERLAASYVNFYIANKAVLVPQFEDVNDQVALDILSKCFPDRKVVGIPARDILLGGGNIHCITQQIPE</sequence>
<comment type="catalytic activity">
    <reaction evidence="1">
        <text>agmatine + H2O = N-carbamoylputrescine + NH4(+)</text>
        <dbReference type="Rhea" id="RHEA:18037"/>
        <dbReference type="ChEBI" id="CHEBI:15377"/>
        <dbReference type="ChEBI" id="CHEBI:28938"/>
        <dbReference type="ChEBI" id="CHEBI:58145"/>
        <dbReference type="ChEBI" id="CHEBI:58318"/>
        <dbReference type="EC" id="3.5.3.12"/>
    </reaction>
</comment>
<comment type="similarity">
    <text evidence="1">Belongs to the agmatine deiminase family.</text>
</comment>
<protein>
    <recommendedName>
        <fullName evidence="1">Putative agmatine deiminase</fullName>
        <ecNumber evidence="1">3.5.3.12</ecNumber>
    </recommendedName>
    <alternativeName>
        <fullName evidence="1">Agmatine iminohydrolase</fullName>
    </alternativeName>
</protein>
<organism>
    <name type="scientific">Streptococcus pneumoniae (strain ATCC BAA-255 / R6)</name>
    <dbReference type="NCBI Taxonomy" id="171101"/>
    <lineage>
        <taxon>Bacteria</taxon>
        <taxon>Bacillati</taxon>
        <taxon>Bacillota</taxon>
        <taxon>Bacilli</taxon>
        <taxon>Lactobacillales</taxon>
        <taxon>Streptococcaceae</taxon>
        <taxon>Streptococcus</taxon>
    </lineage>
</organism>
<evidence type="ECO:0000255" key="1">
    <source>
        <dbReference type="HAMAP-Rule" id="MF_01841"/>
    </source>
</evidence>
<proteinExistence type="inferred from homology"/>
<name>AGUA_STRR6</name>
<feature type="chain" id="PRO_0000194346" description="Putative agmatine deiminase">
    <location>
        <begin position="1"/>
        <end position="361"/>
    </location>
</feature>
<feature type="active site" description="Amidino-cysteine intermediate" evidence="1">
    <location>
        <position position="354"/>
    </location>
</feature>
<gene>
    <name evidence="1" type="primary">aguA</name>
    <name type="ordered locus">spr0822</name>
</gene>
<reference key="1">
    <citation type="journal article" date="2001" name="J. Bacteriol.">
        <title>Genome of the bacterium Streptococcus pneumoniae strain R6.</title>
        <authorList>
            <person name="Hoskins J."/>
            <person name="Alborn W.E. Jr."/>
            <person name="Arnold J."/>
            <person name="Blaszczak L.C."/>
            <person name="Burgett S."/>
            <person name="DeHoff B.S."/>
            <person name="Estrem S.T."/>
            <person name="Fritz L."/>
            <person name="Fu D.-J."/>
            <person name="Fuller W."/>
            <person name="Geringer C."/>
            <person name="Gilmour R."/>
            <person name="Glass J.S."/>
            <person name="Khoja H."/>
            <person name="Kraft A.R."/>
            <person name="Lagace R.E."/>
            <person name="LeBlanc D.J."/>
            <person name="Lee L.N."/>
            <person name="Lefkowitz E.J."/>
            <person name="Lu J."/>
            <person name="Matsushima P."/>
            <person name="McAhren S.M."/>
            <person name="McHenney M."/>
            <person name="McLeaster K."/>
            <person name="Mundy C.W."/>
            <person name="Nicas T.I."/>
            <person name="Norris F.H."/>
            <person name="O'Gara M."/>
            <person name="Peery R.B."/>
            <person name="Robertson G.T."/>
            <person name="Rockey P."/>
            <person name="Sun P.-M."/>
            <person name="Winkler M.E."/>
            <person name="Yang Y."/>
            <person name="Young-Bellido M."/>
            <person name="Zhao G."/>
            <person name="Zook C.A."/>
            <person name="Baltz R.H."/>
            <person name="Jaskunas S.R."/>
            <person name="Rosteck P.R. Jr."/>
            <person name="Skatrud P.L."/>
            <person name="Glass J.I."/>
        </authorList>
    </citation>
    <scope>NUCLEOTIDE SEQUENCE [LARGE SCALE GENOMIC DNA]</scope>
    <source>
        <strain>ATCC BAA-255 / R6</strain>
    </source>
</reference>
<accession>Q8DQ68</accession>